<feature type="signal peptide" evidence="3">
    <location>
        <begin position="1"/>
        <end position="19"/>
    </location>
</feature>
<feature type="chain" id="PRO_0000021678" description="Mercuric transport protein periplasmic component">
    <location>
        <begin position="20"/>
        <end position="91"/>
    </location>
</feature>
<feature type="domain" description="HMA" evidence="4">
    <location>
        <begin position="22"/>
        <end position="88"/>
    </location>
</feature>
<feature type="binding site" evidence="4">
    <location>
        <position position="33"/>
    </location>
    <ligand>
        <name>Hg(2+)</name>
        <dbReference type="ChEBI" id="CHEBI:16793"/>
    </ligand>
</feature>
<feature type="binding site" evidence="4">
    <location>
        <position position="36"/>
    </location>
    <ligand>
        <name>Hg(2+)</name>
        <dbReference type="ChEBI" id="CHEBI:16793"/>
    </ligand>
</feature>
<name>MERP_SHEPU</name>
<organism>
    <name type="scientific">Shewanella putrefaciens</name>
    <name type="common">Pseudomonas putrefaciens</name>
    <dbReference type="NCBI Taxonomy" id="24"/>
    <lineage>
        <taxon>Bacteria</taxon>
        <taxon>Pseudomonadati</taxon>
        <taxon>Pseudomonadota</taxon>
        <taxon>Gammaproteobacteria</taxon>
        <taxon>Alteromonadales</taxon>
        <taxon>Shewanellaceae</taxon>
        <taxon>Shewanella</taxon>
    </lineage>
</organism>
<geneLocation type="plasmid">
    <name>IncJ pMERPH</name>
</geneLocation>
<dbReference type="EMBL" id="Z49196">
    <property type="protein sequence ID" value="CAA89055.1"/>
    <property type="molecule type" value="Genomic_DNA"/>
</dbReference>
<dbReference type="SMR" id="Q54463"/>
<dbReference type="GO" id="GO:0042597">
    <property type="term" value="C:periplasmic space"/>
    <property type="evidence" value="ECO:0007669"/>
    <property type="project" value="UniProtKB-SubCell"/>
</dbReference>
<dbReference type="GO" id="GO:0045340">
    <property type="term" value="F:mercury ion binding"/>
    <property type="evidence" value="ECO:0007669"/>
    <property type="project" value="InterPro"/>
</dbReference>
<dbReference type="GO" id="GO:0015097">
    <property type="term" value="F:mercury ion transmembrane transporter activity"/>
    <property type="evidence" value="ECO:0007669"/>
    <property type="project" value="InterPro"/>
</dbReference>
<dbReference type="CDD" id="cd00371">
    <property type="entry name" value="HMA"/>
    <property type="match status" value="1"/>
</dbReference>
<dbReference type="Gene3D" id="3.30.70.100">
    <property type="match status" value="1"/>
</dbReference>
<dbReference type="InterPro" id="IPR017969">
    <property type="entry name" value="Heavy-metal-associated_CS"/>
</dbReference>
<dbReference type="InterPro" id="IPR006121">
    <property type="entry name" value="HMA_dom"/>
</dbReference>
<dbReference type="InterPro" id="IPR036163">
    <property type="entry name" value="HMA_dom_sf"/>
</dbReference>
<dbReference type="InterPro" id="IPR011795">
    <property type="entry name" value="MerP"/>
</dbReference>
<dbReference type="NCBIfam" id="TIGR02052">
    <property type="entry name" value="MerP"/>
    <property type="match status" value="1"/>
</dbReference>
<dbReference type="Pfam" id="PF00403">
    <property type="entry name" value="HMA"/>
    <property type="match status" value="1"/>
</dbReference>
<dbReference type="SUPFAM" id="SSF55008">
    <property type="entry name" value="HMA, heavy metal-associated domain"/>
    <property type="match status" value="1"/>
</dbReference>
<dbReference type="PROSITE" id="PS01047">
    <property type="entry name" value="HMA_1"/>
    <property type="match status" value="1"/>
</dbReference>
<dbReference type="PROSITE" id="PS50846">
    <property type="entry name" value="HMA_2"/>
    <property type="match status" value="1"/>
</dbReference>
<keyword id="KW-0475">Mercuric resistance</keyword>
<keyword id="KW-0476">Mercury</keyword>
<keyword id="KW-0479">Metal-binding</keyword>
<keyword id="KW-0574">Periplasm</keyword>
<keyword id="KW-0614">Plasmid</keyword>
<keyword id="KW-0732">Signal</keyword>
<accession>Q54463</accession>
<gene>
    <name type="primary">merP</name>
</gene>
<protein>
    <recommendedName>
        <fullName evidence="1">Mercuric transport protein periplasmic component</fullName>
    </recommendedName>
    <alternativeName>
        <fullName evidence="1">Mercury scavenger protein</fullName>
    </alternativeName>
    <alternativeName>
        <fullName evidence="1">Periplasmic mercury ion-binding protein</fullName>
    </alternativeName>
</protein>
<evidence type="ECO:0000250" key="1">
    <source>
        <dbReference type="UniProtKB" id="P04129"/>
    </source>
</evidence>
<evidence type="ECO:0000250" key="2">
    <source>
        <dbReference type="UniProtKB" id="P13113"/>
    </source>
</evidence>
<evidence type="ECO:0000255" key="3"/>
<evidence type="ECO:0000255" key="4">
    <source>
        <dbReference type="PROSITE-ProRule" id="PRU00280"/>
    </source>
</evidence>
<evidence type="ECO:0000305" key="5"/>
<comment type="function">
    <text evidence="1">Involved in mercury resistance. Acts as a mercury scavenger that specifically binds to a mercuric ion in the periplasm and probably passes it to the cytoplasmic mercuric reductase MerA via the mercuric transport protein MerT.</text>
</comment>
<comment type="subunit">
    <text evidence="2">Monomer.</text>
</comment>
<comment type="subcellular location">
    <subcellularLocation>
        <location evidence="2">Periplasm</location>
    </subcellularLocation>
</comment>
<comment type="similarity">
    <text evidence="5">Belongs to the MerP family.</text>
</comment>
<sequence>MKTLALMSLFVLTSLNALAAPKTVTLEVPTMNCVTCPFTVEKALQKVDGVSKAEVTFKTKLAVVTFDDEKSTVKALTEATTNAGYPSTLKE</sequence>
<proteinExistence type="inferred from homology"/>
<reference key="1">
    <citation type="journal article" date="1997" name="FEMS Microbiol. Rev.">
        <title>Distribution, diversity and evolution of the bacterial mercury resistance (mer) operon.</title>
        <authorList>
            <person name="Osborn A.M."/>
            <person name="Bruce K.D."/>
            <person name="Strike P."/>
            <person name="Ritchie D.A."/>
        </authorList>
    </citation>
    <scope>NUCLEOTIDE SEQUENCE [GENOMIC DNA]</scope>
</reference>